<comment type="function">
    <text evidence="1">Involved in chemotaxis. Part of a chemotaxis signal transduction system that modulates chemotaxis in response to various stimuli. Catalyzes the demethylation of specific methylglutamate residues introduced into the chemoreceptors (methyl-accepting chemotaxis proteins or MCP) by CheR. Also mediates the irreversible deamidation of specific glutamine residues to glutamic acid.</text>
</comment>
<comment type="catalytic activity">
    <reaction evidence="1">
        <text>[protein]-L-glutamate 5-O-methyl ester + H2O = L-glutamyl-[protein] + methanol + H(+)</text>
        <dbReference type="Rhea" id="RHEA:23236"/>
        <dbReference type="Rhea" id="RHEA-COMP:10208"/>
        <dbReference type="Rhea" id="RHEA-COMP:10311"/>
        <dbReference type="ChEBI" id="CHEBI:15377"/>
        <dbReference type="ChEBI" id="CHEBI:15378"/>
        <dbReference type="ChEBI" id="CHEBI:17790"/>
        <dbReference type="ChEBI" id="CHEBI:29973"/>
        <dbReference type="ChEBI" id="CHEBI:82795"/>
        <dbReference type="EC" id="3.1.1.61"/>
    </reaction>
</comment>
<comment type="catalytic activity">
    <reaction evidence="1">
        <text>L-glutaminyl-[protein] + H2O = L-glutamyl-[protein] + NH4(+)</text>
        <dbReference type="Rhea" id="RHEA:16441"/>
        <dbReference type="Rhea" id="RHEA-COMP:10207"/>
        <dbReference type="Rhea" id="RHEA-COMP:10208"/>
        <dbReference type="ChEBI" id="CHEBI:15377"/>
        <dbReference type="ChEBI" id="CHEBI:28938"/>
        <dbReference type="ChEBI" id="CHEBI:29973"/>
        <dbReference type="ChEBI" id="CHEBI:30011"/>
        <dbReference type="EC" id="3.5.1.44"/>
    </reaction>
</comment>
<comment type="subcellular location">
    <subcellularLocation>
        <location evidence="1">Cytoplasm</location>
    </subcellularLocation>
</comment>
<comment type="domain">
    <text evidence="1">Contains a C-terminal catalytic domain, and an N-terminal region which modulates catalytic activity.</text>
</comment>
<comment type="PTM">
    <text evidence="1">Phosphorylated by CheA. Phosphorylation of the N-terminal regulatory domain activates the methylesterase activity.</text>
</comment>
<comment type="similarity">
    <text evidence="1">Belongs to the CheB family.</text>
</comment>
<proteinExistence type="inferred from homology"/>
<evidence type="ECO:0000255" key="1">
    <source>
        <dbReference type="HAMAP-Rule" id="MF_00099"/>
    </source>
</evidence>
<accession>Q9FAD8</accession>
<sequence>MSKIRVLSVDDSALMRQIMTEIINSHSDMEMVATAPDPLVARDLIKKYNPDVLTLDVEMPRMDGIDFLEKLMRLRPMPVVMVSSLTGKGSEITLRALELGAVDFVTKPQLGIREGMLAYSEMIAEKIRHPSRAKLAAHTPLAAPDTLKAGPLLSSEKLLVIGASTGGTEAIRHVLQPLPLSSPGILITQHMPPGFTRSFAERLNKLCQISVKEAEDGERVPPGHAYIAPGDKHMELSRRRANYQIKIHDGPPVNRHRPSVDVLFHSVAKHAGRNAVGVILTGMGNDGAAGMLAMPIAGAWTIAQNEASCVVFGMPREAINMGGVSEVVDLSQVVSQQMLEKISAGQAIRI</sequence>
<organism>
    <name type="scientific">Enterobacter cloacae</name>
    <dbReference type="NCBI Taxonomy" id="550"/>
    <lineage>
        <taxon>Bacteria</taxon>
        <taxon>Pseudomonadati</taxon>
        <taxon>Pseudomonadota</taxon>
        <taxon>Gammaproteobacteria</taxon>
        <taxon>Enterobacterales</taxon>
        <taxon>Enterobacteriaceae</taxon>
        <taxon>Enterobacter</taxon>
        <taxon>Enterobacter cloacae complex</taxon>
    </lineage>
</organism>
<keyword id="KW-0145">Chemotaxis</keyword>
<keyword id="KW-0963">Cytoplasm</keyword>
<keyword id="KW-0378">Hydrolase</keyword>
<keyword id="KW-0597">Phosphoprotein</keyword>
<feature type="chain" id="PRO_0000157995" description="Protein-glutamate methylesterase/protein-glutamine glutaminase">
    <location>
        <begin position="1"/>
        <end position="350"/>
    </location>
</feature>
<feature type="domain" description="Response regulatory" evidence="1">
    <location>
        <begin position="5"/>
        <end position="122"/>
    </location>
</feature>
<feature type="domain" description="CheB-type methylesterase" evidence="1">
    <location>
        <begin position="152"/>
        <end position="338"/>
    </location>
</feature>
<feature type="active site" evidence="1">
    <location>
        <position position="164"/>
    </location>
</feature>
<feature type="active site" evidence="1">
    <location>
        <position position="190"/>
    </location>
</feature>
<feature type="active site" evidence="1">
    <location>
        <position position="286"/>
    </location>
</feature>
<feature type="modified residue" description="4-aspartylphosphate" evidence="1">
    <location>
        <position position="56"/>
    </location>
</feature>
<name>CHEB_ENTCL</name>
<protein>
    <recommendedName>
        <fullName evidence="1">Protein-glutamate methylesterase/protein-glutamine glutaminase</fullName>
        <ecNumber evidence="1">3.1.1.61</ecNumber>
        <ecNumber evidence="1">3.5.1.44</ecNumber>
    </recommendedName>
</protein>
<reference key="1">
    <citation type="journal article" date="2001" name="Biosci. Biotechnol. Biochem.">
        <title>Isolation and characterization of the Enterobacter cloacae cheR mutant defective in phosphate taxis.</title>
        <authorList>
            <person name="Kato J."/>
            <person name="Nagata C."/>
            <person name="Yang L."/>
            <person name="Kuroda A."/>
            <person name="Ikeda T."/>
            <person name="Takiguchi N."/>
            <person name="Ohtake H."/>
        </authorList>
    </citation>
    <scope>NUCLEOTIDE SEQUENCE [GENOMIC DNA]</scope>
    <source>
        <strain>ATCC 7256 / NBRC 3320</strain>
    </source>
</reference>
<dbReference type="EC" id="3.1.1.61" evidence="1"/>
<dbReference type="EC" id="3.5.1.44" evidence="1"/>
<dbReference type="EMBL" id="AB040876">
    <property type="protein sequence ID" value="BAB15840.1"/>
    <property type="molecule type" value="Genomic_DNA"/>
</dbReference>
<dbReference type="SMR" id="Q9FAD8"/>
<dbReference type="eggNOG" id="COG2201">
    <property type="taxonomic scope" value="Bacteria"/>
</dbReference>
<dbReference type="GO" id="GO:0005737">
    <property type="term" value="C:cytoplasm"/>
    <property type="evidence" value="ECO:0007669"/>
    <property type="project" value="UniProtKB-SubCell"/>
</dbReference>
<dbReference type="GO" id="GO:0000156">
    <property type="term" value="F:phosphorelay response regulator activity"/>
    <property type="evidence" value="ECO:0007669"/>
    <property type="project" value="InterPro"/>
</dbReference>
<dbReference type="GO" id="GO:0008984">
    <property type="term" value="F:protein-glutamate methylesterase activity"/>
    <property type="evidence" value="ECO:0007669"/>
    <property type="project" value="UniProtKB-UniRule"/>
</dbReference>
<dbReference type="GO" id="GO:0050568">
    <property type="term" value="F:protein-glutamine glutaminase activity"/>
    <property type="evidence" value="ECO:0007669"/>
    <property type="project" value="UniProtKB-UniRule"/>
</dbReference>
<dbReference type="GO" id="GO:0006935">
    <property type="term" value="P:chemotaxis"/>
    <property type="evidence" value="ECO:0007669"/>
    <property type="project" value="UniProtKB-UniRule"/>
</dbReference>
<dbReference type="CDD" id="cd16432">
    <property type="entry name" value="CheB_Rec"/>
    <property type="match status" value="1"/>
</dbReference>
<dbReference type="CDD" id="cd17541">
    <property type="entry name" value="REC_CheB-like"/>
    <property type="match status" value="1"/>
</dbReference>
<dbReference type="FunFam" id="3.40.50.180:FF:000001">
    <property type="entry name" value="Protein-glutamate methylesterase/protein-glutamine glutaminase"/>
    <property type="match status" value="1"/>
</dbReference>
<dbReference type="FunFam" id="3.40.50.2300:FF:000060">
    <property type="entry name" value="Protein-glutamate methylesterase/protein-glutamine glutaminase"/>
    <property type="match status" value="1"/>
</dbReference>
<dbReference type="Gene3D" id="3.40.50.2300">
    <property type="match status" value="1"/>
</dbReference>
<dbReference type="Gene3D" id="3.40.50.180">
    <property type="entry name" value="Methylesterase CheB, C-terminal domain"/>
    <property type="match status" value="1"/>
</dbReference>
<dbReference type="HAMAP" id="MF_00099">
    <property type="entry name" value="CheB_chemtxs"/>
    <property type="match status" value="1"/>
</dbReference>
<dbReference type="InterPro" id="IPR008248">
    <property type="entry name" value="CheB-like"/>
</dbReference>
<dbReference type="InterPro" id="IPR035909">
    <property type="entry name" value="CheB_C"/>
</dbReference>
<dbReference type="InterPro" id="IPR011006">
    <property type="entry name" value="CheY-like_superfamily"/>
</dbReference>
<dbReference type="InterPro" id="IPR000673">
    <property type="entry name" value="Sig_transdc_resp-reg_Me-estase"/>
</dbReference>
<dbReference type="InterPro" id="IPR001789">
    <property type="entry name" value="Sig_transdc_resp-reg_receiver"/>
</dbReference>
<dbReference type="NCBIfam" id="NF001965">
    <property type="entry name" value="PRK00742.1"/>
    <property type="match status" value="1"/>
</dbReference>
<dbReference type="NCBIfam" id="NF009206">
    <property type="entry name" value="PRK12555.1"/>
    <property type="match status" value="1"/>
</dbReference>
<dbReference type="PANTHER" id="PTHR42872">
    <property type="entry name" value="PROTEIN-GLUTAMATE METHYLESTERASE/PROTEIN-GLUTAMINE GLUTAMINASE"/>
    <property type="match status" value="1"/>
</dbReference>
<dbReference type="PANTHER" id="PTHR42872:SF6">
    <property type="entry name" value="PROTEIN-GLUTAMATE METHYLESTERASE_PROTEIN-GLUTAMINE GLUTAMINASE"/>
    <property type="match status" value="1"/>
</dbReference>
<dbReference type="Pfam" id="PF01339">
    <property type="entry name" value="CheB_methylest"/>
    <property type="match status" value="1"/>
</dbReference>
<dbReference type="Pfam" id="PF00072">
    <property type="entry name" value="Response_reg"/>
    <property type="match status" value="1"/>
</dbReference>
<dbReference type="PIRSF" id="PIRSF000876">
    <property type="entry name" value="RR_chemtxs_CheB"/>
    <property type="match status" value="1"/>
</dbReference>
<dbReference type="SMART" id="SM00448">
    <property type="entry name" value="REC"/>
    <property type="match status" value="1"/>
</dbReference>
<dbReference type="SUPFAM" id="SSF52172">
    <property type="entry name" value="CheY-like"/>
    <property type="match status" value="1"/>
</dbReference>
<dbReference type="SUPFAM" id="SSF52738">
    <property type="entry name" value="Methylesterase CheB, C-terminal domain"/>
    <property type="match status" value="1"/>
</dbReference>
<dbReference type="PROSITE" id="PS50122">
    <property type="entry name" value="CHEB"/>
    <property type="match status" value="1"/>
</dbReference>
<dbReference type="PROSITE" id="PS50110">
    <property type="entry name" value="RESPONSE_REGULATORY"/>
    <property type="match status" value="1"/>
</dbReference>
<gene>
    <name evidence="1" type="primary">cheB</name>
</gene>